<name>PROA_ESCF3</name>
<accession>B7LNF7</accession>
<sequence length="417" mass="44546">MLEQMGIAAKQASYKLAQLSSREKNRVLEKIADELEAQSESILNANAQDVADARANGLSDAMLDRLALTPARLKGIADDVRQVCNLADPVGQVIDGGVLDSGLRLERRRVPLGVIGVIYEARPNVTVDVASLCLKTGNAVILRGGKETCRTNAATVAVIQDALNSCGLPAGAVQAIDNPDRALVSELLRMDKYIDMLIPRGGAGLHKLCREQSTIPVITGGIGVCHIYVDESAEIAEALKVIVNAKTQRPSTCNTVETLLVNKNIADSFLPALSKQMAESGVTLHADAGALAQLQTGPAKVVAVKAEEYDDEFLSLDLNVKIVSDLDDAIAHIREHGTQHSDAILTRDMRNAQRFVNEVDSSAVYVNASTRFTDGGQFGLGAEVAVSTQKLHARGPMGLEALTTYKWIGIGDYTIRA</sequence>
<proteinExistence type="inferred from homology"/>
<feature type="chain" id="PRO_1000123807" description="Gamma-glutamyl phosphate reductase">
    <location>
        <begin position="1"/>
        <end position="417"/>
    </location>
</feature>
<gene>
    <name evidence="1" type="primary">proA</name>
    <name type="ordered locus">EFER_2735</name>
</gene>
<dbReference type="EC" id="1.2.1.41" evidence="1"/>
<dbReference type="EMBL" id="CU928158">
    <property type="protein sequence ID" value="CAQ90230.1"/>
    <property type="molecule type" value="Genomic_DNA"/>
</dbReference>
<dbReference type="RefSeq" id="WP_000893302.1">
    <property type="nucleotide sequence ID" value="NC_011740.1"/>
</dbReference>
<dbReference type="SMR" id="B7LNF7"/>
<dbReference type="GeneID" id="75056228"/>
<dbReference type="KEGG" id="efe:EFER_2735"/>
<dbReference type="HOGENOM" id="CLU_030231_0_0_6"/>
<dbReference type="OrthoDB" id="9809970at2"/>
<dbReference type="UniPathway" id="UPA00098">
    <property type="reaction ID" value="UER00360"/>
</dbReference>
<dbReference type="Proteomes" id="UP000000745">
    <property type="component" value="Chromosome"/>
</dbReference>
<dbReference type="GO" id="GO:0005737">
    <property type="term" value="C:cytoplasm"/>
    <property type="evidence" value="ECO:0007669"/>
    <property type="project" value="UniProtKB-SubCell"/>
</dbReference>
<dbReference type="GO" id="GO:0004350">
    <property type="term" value="F:glutamate-5-semialdehyde dehydrogenase activity"/>
    <property type="evidence" value="ECO:0007669"/>
    <property type="project" value="UniProtKB-UniRule"/>
</dbReference>
<dbReference type="GO" id="GO:0050661">
    <property type="term" value="F:NADP binding"/>
    <property type="evidence" value="ECO:0007669"/>
    <property type="project" value="InterPro"/>
</dbReference>
<dbReference type="GO" id="GO:0055129">
    <property type="term" value="P:L-proline biosynthetic process"/>
    <property type="evidence" value="ECO:0007669"/>
    <property type="project" value="UniProtKB-UniRule"/>
</dbReference>
<dbReference type="CDD" id="cd07079">
    <property type="entry name" value="ALDH_F18-19_ProA-GPR"/>
    <property type="match status" value="1"/>
</dbReference>
<dbReference type="FunFam" id="3.40.309.10:FF:000006">
    <property type="entry name" value="Gamma-glutamyl phosphate reductase"/>
    <property type="match status" value="1"/>
</dbReference>
<dbReference type="Gene3D" id="3.40.605.10">
    <property type="entry name" value="Aldehyde Dehydrogenase, Chain A, domain 1"/>
    <property type="match status" value="1"/>
</dbReference>
<dbReference type="Gene3D" id="3.40.309.10">
    <property type="entry name" value="Aldehyde Dehydrogenase, Chain A, domain 2"/>
    <property type="match status" value="1"/>
</dbReference>
<dbReference type="HAMAP" id="MF_00412">
    <property type="entry name" value="ProA"/>
    <property type="match status" value="1"/>
</dbReference>
<dbReference type="InterPro" id="IPR016161">
    <property type="entry name" value="Ald_DH/histidinol_DH"/>
</dbReference>
<dbReference type="InterPro" id="IPR016163">
    <property type="entry name" value="Ald_DH_C"/>
</dbReference>
<dbReference type="InterPro" id="IPR016162">
    <property type="entry name" value="Ald_DH_N"/>
</dbReference>
<dbReference type="InterPro" id="IPR015590">
    <property type="entry name" value="Aldehyde_DH_dom"/>
</dbReference>
<dbReference type="InterPro" id="IPR020593">
    <property type="entry name" value="G-glutamylP_reductase_CS"/>
</dbReference>
<dbReference type="InterPro" id="IPR012134">
    <property type="entry name" value="Glu-5-SA_DH"/>
</dbReference>
<dbReference type="InterPro" id="IPR000965">
    <property type="entry name" value="GPR_dom"/>
</dbReference>
<dbReference type="NCBIfam" id="NF001221">
    <property type="entry name" value="PRK00197.1"/>
    <property type="match status" value="1"/>
</dbReference>
<dbReference type="NCBIfam" id="TIGR00407">
    <property type="entry name" value="proA"/>
    <property type="match status" value="1"/>
</dbReference>
<dbReference type="PANTHER" id="PTHR11063:SF8">
    <property type="entry name" value="DELTA-1-PYRROLINE-5-CARBOXYLATE SYNTHASE"/>
    <property type="match status" value="1"/>
</dbReference>
<dbReference type="PANTHER" id="PTHR11063">
    <property type="entry name" value="GLUTAMATE SEMIALDEHYDE DEHYDROGENASE"/>
    <property type="match status" value="1"/>
</dbReference>
<dbReference type="Pfam" id="PF00171">
    <property type="entry name" value="Aldedh"/>
    <property type="match status" value="1"/>
</dbReference>
<dbReference type="PIRSF" id="PIRSF000151">
    <property type="entry name" value="GPR"/>
    <property type="match status" value="1"/>
</dbReference>
<dbReference type="SUPFAM" id="SSF53720">
    <property type="entry name" value="ALDH-like"/>
    <property type="match status" value="1"/>
</dbReference>
<dbReference type="PROSITE" id="PS01223">
    <property type="entry name" value="PROA"/>
    <property type="match status" value="1"/>
</dbReference>
<keyword id="KW-0028">Amino-acid biosynthesis</keyword>
<keyword id="KW-0963">Cytoplasm</keyword>
<keyword id="KW-0521">NADP</keyword>
<keyword id="KW-0560">Oxidoreductase</keyword>
<keyword id="KW-0641">Proline biosynthesis</keyword>
<comment type="function">
    <text evidence="1">Catalyzes the NADPH-dependent reduction of L-glutamate 5-phosphate into L-glutamate 5-semialdehyde and phosphate. The product spontaneously undergoes cyclization to form 1-pyrroline-5-carboxylate.</text>
</comment>
<comment type="catalytic activity">
    <reaction evidence="1">
        <text>L-glutamate 5-semialdehyde + phosphate + NADP(+) = L-glutamyl 5-phosphate + NADPH + H(+)</text>
        <dbReference type="Rhea" id="RHEA:19541"/>
        <dbReference type="ChEBI" id="CHEBI:15378"/>
        <dbReference type="ChEBI" id="CHEBI:43474"/>
        <dbReference type="ChEBI" id="CHEBI:57783"/>
        <dbReference type="ChEBI" id="CHEBI:58066"/>
        <dbReference type="ChEBI" id="CHEBI:58274"/>
        <dbReference type="ChEBI" id="CHEBI:58349"/>
        <dbReference type="EC" id="1.2.1.41"/>
    </reaction>
</comment>
<comment type="pathway">
    <text evidence="1">Amino-acid biosynthesis; L-proline biosynthesis; L-glutamate 5-semialdehyde from L-glutamate: step 2/2.</text>
</comment>
<comment type="subcellular location">
    <subcellularLocation>
        <location evidence="1">Cytoplasm</location>
    </subcellularLocation>
</comment>
<comment type="similarity">
    <text evidence="1">Belongs to the gamma-glutamyl phosphate reductase family.</text>
</comment>
<organism>
    <name type="scientific">Escherichia fergusonii (strain ATCC 35469 / DSM 13698 / CCUG 18766 / IAM 14443 / JCM 21226 / LMG 7866 / NBRC 102419 / NCTC 12128 / CDC 0568-73)</name>
    <dbReference type="NCBI Taxonomy" id="585054"/>
    <lineage>
        <taxon>Bacteria</taxon>
        <taxon>Pseudomonadati</taxon>
        <taxon>Pseudomonadota</taxon>
        <taxon>Gammaproteobacteria</taxon>
        <taxon>Enterobacterales</taxon>
        <taxon>Enterobacteriaceae</taxon>
        <taxon>Escherichia</taxon>
    </lineage>
</organism>
<reference key="1">
    <citation type="journal article" date="2009" name="PLoS Genet.">
        <title>Organised genome dynamics in the Escherichia coli species results in highly diverse adaptive paths.</title>
        <authorList>
            <person name="Touchon M."/>
            <person name="Hoede C."/>
            <person name="Tenaillon O."/>
            <person name="Barbe V."/>
            <person name="Baeriswyl S."/>
            <person name="Bidet P."/>
            <person name="Bingen E."/>
            <person name="Bonacorsi S."/>
            <person name="Bouchier C."/>
            <person name="Bouvet O."/>
            <person name="Calteau A."/>
            <person name="Chiapello H."/>
            <person name="Clermont O."/>
            <person name="Cruveiller S."/>
            <person name="Danchin A."/>
            <person name="Diard M."/>
            <person name="Dossat C."/>
            <person name="Karoui M.E."/>
            <person name="Frapy E."/>
            <person name="Garry L."/>
            <person name="Ghigo J.M."/>
            <person name="Gilles A.M."/>
            <person name="Johnson J."/>
            <person name="Le Bouguenec C."/>
            <person name="Lescat M."/>
            <person name="Mangenot S."/>
            <person name="Martinez-Jehanne V."/>
            <person name="Matic I."/>
            <person name="Nassif X."/>
            <person name="Oztas S."/>
            <person name="Petit M.A."/>
            <person name="Pichon C."/>
            <person name="Rouy Z."/>
            <person name="Ruf C.S."/>
            <person name="Schneider D."/>
            <person name="Tourret J."/>
            <person name="Vacherie B."/>
            <person name="Vallenet D."/>
            <person name="Medigue C."/>
            <person name="Rocha E.P.C."/>
            <person name="Denamur E."/>
        </authorList>
    </citation>
    <scope>NUCLEOTIDE SEQUENCE [LARGE SCALE GENOMIC DNA]</scope>
    <source>
        <strain>ATCC 35469 / DSM 13698 / BCRC 15582 / CCUG 18766 / IAM 14443 / JCM 21226 / LMG 7866 / NBRC 102419 / NCTC 12128 / CDC 0568-73</strain>
    </source>
</reference>
<evidence type="ECO:0000255" key="1">
    <source>
        <dbReference type="HAMAP-Rule" id="MF_00412"/>
    </source>
</evidence>
<protein>
    <recommendedName>
        <fullName evidence="1">Gamma-glutamyl phosphate reductase</fullName>
        <shortName evidence="1">GPR</shortName>
        <ecNumber evidence="1">1.2.1.41</ecNumber>
    </recommendedName>
    <alternativeName>
        <fullName evidence="1">Glutamate-5-semialdehyde dehydrogenase</fullName>
    </alternativeName>
    <alternativeName>
        <fullName evidence="1">Glutamyl-gamma-semialdehyde dehydrogenase</fullName>
        <shortName evidence="1">GSA dehydrogenase</shortName>
    </alternativeName>
</protein>